<sequence>MQYSTLAGQTDNSLVSNNFGFLRLPLNFMPYESHADWVITGVPYDMAVSGRSGARFGPEAIRRASVNLAWEHRRFPWTFDVRERLNIIDCGDLVFSFGDSRDFVEKMEAHAGKLLSSGKRCLSLGGDHFITLPLLRAHARYFGKLALIHFDAHTDTYDNGSEYDHGTMFYTAPKEGLIDPSRSVQIGIRTEHSKKLPFTVLSAPKVNEDSVEETVRKIKETVGNMPVYLTFDIDCLDPSFAPGTGTPVCGGLSSDRALKILRGLTDLDIVGMDVVEVAPSYDQSDITALAGATIALEMLYLQGAKKD</sequence>
<reference key="1">
    <citation type="journal article" date="2000" name="Nature">
        <title>Complete DNA sequence of a serogroup A strain of Neisseria meningitidis Z2491.</title>
        <authorList>
            <person name="Parkhill J."/>
            <person name="Achtman M."/>
            <person name="James K.D."/>
            <person name="Bentley S.D."/>
            <person name="Churcher C.M."/>
            <person name="Klee S.R."/>
            <person name="Morelli G."/>
            <person name="Basham D."/>
            <person name="Brown D."/>
            <person name="Chillingworth T."/>
            <person name="Davies R.M."/>
            <person name="Davis P."/>
            <person name="Devlin K."/>
            <person name="Feltwell T."/>
            <person name="Hamlin N."/>
            <person name="Holroyd S."/>
            <person name="Jagels K."/>
            <person name="Leather S."/>
            <person name="Moule S."/>
            <person name="Mungall K.L."/>
            <person name="Quail M.A."/>
            <person name="Rajandream M.A."/>
            <person name="Rutherford K.M."/>
            <person name="Simmonds M."/>
            <person name="Skelton J."/>
            <person name="Whitehead S."/>
            <person name="Spratt B.G."/>
            <person name="Barrell B.G."/>
        </authorList>
    </citation>
    <scope>NUCLEOTIDE SEQUENCE [LARGE SCALE GENOMIC DNA]</scope>
    <source>
        <strain>DSM 15465 / Z2491</strain>
    </source>
</reference>
<dbReference type="EC" id="3.5.3.11" evidence="1"/>
<dbReference type="EMBL" id="AL157959">
    <property type="protein sequence ID" value="CAM09121.1"/>
    <property type="molecule type" value="Genomic_DNA"/>
</dbReference>
<dbReference type="PIR" id="B81196">
    <property type="entry name" value="B81196"/>
</dbReference>
<dbReference type="RefSeq" id="WP_002222073.1">
    <property type="nucleotide sequence ID" value="NC_003116.1"/>
</dbReference>
<dbReference type="SMR" id="P60653"/>
<dbReference type="EnsemblBacteria" id="CAM09121">
    <property type="protein sequence ID" value="CAM09121"/>
    <property type="gene ID" value="NMA2016"/>
</dbReference>
<dbReference type="GeneID" id="93387564"/>
<dbReference type="KEGG" id="nma:NMA2016"/>
<dbReference type="HOGENOM" id="CLU_039478_0_0_4"/>
<dbReference type="UniPathway" id="UPA00534">
    <property type="reaction ID" value="UER00287"/>
</dbReference>
<dbReference type="Proteomes" id="UP000000626">
    <property type="component" value="Chromosome"/>
</dbReference>
<dbReference type="GO" id="GO:0008783">
    <property type="term" value="F:agmatinase activity"/>
    <property type="evidence" value="ECO:0007669"/>
    <property type="project" value="UniProtKB-UniRule"/>
</dbReference>
<dbReference type="GO" id="GO:0030145">
    <property type="term" value="F:manganese ion binding"/>
    <property type="evidence" value="ECO:0007669"/>
    <property type="project" value="InterPro"/>
</dbReference>
<dbReference type="GO" id="GO:0033389">
    <property type="term" value="P:putrescine biosynthetic process from arginine, via agmatine"/>
    <property type="evidence" value="ECO:0007669"/>
    <property type="project" value="TreeGrafter"/>
</dbReference>
<dbReference type="GO" id="GO:0008295">
    <property type="term" value="P:spermidine biosynthetic process"/>
    <property type="evidence" value="ECO:0007669"/>
    <property type="project" value="UniProtKB-UniRule"/>
</dbReference>
<dbReference type="CDD" id="cd11592">
    <property type="entry name" value="Agmatinase_PAH"/>
    <property type="match status" value="1"/>
</dbReference>
<dbReference type="FunFam" id="3.40.800.10:FF:000001">
    <property type="entry name" value="Agmatinase"/>
    <property type="match status" value="1"/>
</dbReference>
<dbReference type="Gene3D" id="3.40.800.10">
    <property type="entry name" value="Ureohydrolase domain"/>
    <property type="match status" value="1"/>
</dbReference>
<dbReference type="HAMAP" id="MF_01418">
    <property type="entry name" value="SpeB"/>
    <property type="match status" value="1"/>
</dbReference>
<dbReference type="InterPro" id="IPR023694">
    <property type="entry name" value="Agmatinase"/>
</dbReference>
<dbReference type="InterPro" id="IPR005925">
    <property type="entry name" value="Agmatinase-rel"/>
</dbReference>
<dbReference type="InterPro" id="IPR006035">
    <property type="entry name" value="Ureohydrolase"/>
</dbReference>
<dbReference type="InterPro" id="IPR023696">
    <property type="entry name" value="Ureohydrolase_dom_sf"/>
</dbReference>
<dbReference type="InterPro" id="IPR020855">
    <property type="entry name" value="Ureohydrolase_Mn_BS"/>
</dbReference>
<dbReference type="NCBIfam" id="TIGR01230">
    <property type="entry name" value="agmatinase"/>
    <property type="match status" value="1"/>
</dbReference>
<dbReference type="NCBIfam" id="NF002564">
    <property type="entry name" value="PRK02190.1"/>
    <property type="match status" value="1"/>
</dbReference>
<dbReference type="PANTHER" id="PTHR11358">
    <property type="entry name" value="ARGINASE/AGMATINASE"/>
    <property type="match status" value="1"/>
</dbReference>
<dbReference type="PANTHER" id="PTHR11358:SF26">
    <property type="entry name" value="GUANIDINO ACID HYDROLASE, MITOCHONDRIAL"/>
    <property type="match status" value="1"/>
</dbReference>
<dbReference type="Pfam" id="PF00491">
    <property type="entry name" value="Arginase"/>
    <property type="match status" value="1"/>
</dbReference>
<dbReference type="PIRSF" id="PIRSF036979">
    <property type="entry name" value="Arginase"/>
    <property type="match status" value="1"/>
</dbReference>
<dbReference type="SUPFAM" id="SSF52768">
    <property type="entry name" value="Arginase/deacetylase"/>
    <property type="match status" value="1"/>
</dbReference>
<dbReference type="PROSITE" id="PS01053">
    <property type="entry name" value="ARGINASE_1"/>
    <property type="match status" value="1"/>
</dbReference>
<dbReference type="PROSITE" id="PS51409">
    <property type="entry name" value="ARGINASE_2"/>
    <property type="match status" value="1"/>
</dbReference>
<keyword id="KW-0378">Hydrolase</keyword>
<keyword id="KW-0464">Manganese</keyword>
<keyword id="KW-0479">Metal-binding</keyword>
<keyword id="KW-0620">Polyamine biosynthesis</keyword>
<keyword id="KW-0661">Putrescine biosynthesis</keyword>
<keyword id="KW-0745">Spermidine biosynthesis</keyword>
<accession>P60653</accession>
<accession>A1ITK4</accession>
<accession>Q9JRG2</accession>
<organism>
    <name type="scientific">Neisseria meningitidis serogroup A / serotype 4A (strain DSM 15465 / Z2491)</name>
    <dbReference type="NCBI Taxonomy" id="122587"/>
    <lineage>
        <taxon>Bacteria</taxon>
        <taxon>Pseudomonadati</taxon>
        <taxon>Pseudomonadota</taxon>
        <taxon>Betaproteobacteria</taxon>
        <taxon>Neisseriales</taxon>
        <taxon>Neisseriaceae</taxon>
        <taxon>Neisseria</taxon>
    </lineage>
</organism>
<feature type="chain" id="PRO_0000173735" description="Agmatinase">
    <location>
        <begin position="1"/>
        <end position="307"/>
    </location>
</feature>
<feature type="binding site" evidence="1">
    <location>
        <position position="128"/>
    </location>
    <ligand>
        <name>Mn(2+)</name>
        <dbReference type="ChEBI" id="CHEBI:29035"/>
    </ligand>
</feature>
<feature type="binding site" evidence="1">
    <location>
        <position position="151"/>
    </location>
    <ligand>
        <name>Mn(2+)</name>
        <dbReference type="ChEBI" id="CHEBI:29035"/>
    </ligand>
</feature>
<feature type="binding site" evidence="1">
    <location>
        <position position="153"/>
    </location>
    <ligand>
        <name>Mn(2+)</name>
        <dbReference type="ChEBI" id="CHEBI:29035"/>
    </ligand>
</feature>
<feature type="binding site" evidence="1">
    <location>
        <position position="155"/>
    </location>
    <ligand>
        <name>Mn(2+)</name>
        <dbReference type="ChEBI" id="CHEBI:29035"/>
    </ligand>
</feature>
<feature type="binding site" evidence="1">
    <location>
        <position position="232"/>
    </location>
    <ligand>
        <name>Mn(2+)</name>
        <dbReference type="ChEBI" id="CHEBI:29035"/>
    </ligand>
</feature>
<feature type="binding site" evidence="1">
    <location>
        <position position="234"/>
    </location>
    <ligand>
        <name>Mn(2+)</name>
        <dbReference type="ChEBI" id="CHEBI:29035"/>
    </ligand>
</feature>
<gene>
    <name evidence="1" type="primary">speB</name>
    <name type="ordered locus">NMA2016</name>
</gene>
<proteinExistence type="inferred from homology"/>
<evidence type="ECO:0000255" key="1">
    <source>
        <dbReference type="HAMAP-Rule" id="MF_01418"/>
    </source>
</evidence>
<protein>
    <recommendedName>
        <fullName evidence="1">Agmatinase</fullName>
        <ecNumber evidence="1">3.5.3.11</ecNumber>
    </recommendedName>
    <alternativeName>
        <fullName evidence="1">Agmatine ureohydrolase</fullName>
        <shortName evidence="1">AUH</shortName>
    </alternativeName>
</protein>
<comment type="function">
    <text evidence="1">Catalyzes the formation of putrescine from agmatine.</text>
</comment>
<comment type="catalytic activity">
    <reaction evidence="1">
        <text>agmatine + H2O = urea + putrescine</text>
        <dbReference type="Rhea" id="RHEA:13929"/>
        <dbReference type="ChEBI" id="CHEBI:15377"/>
        <dbReference type="ChEBI" id="CHEBI:16199"/>
        <dbReference type="ChEBI" id="CHEBI:58145"/>
        <dbReference type="ChEBI" id="CHEBI:326268"/>
        <dbReference type="EC" id="3.5.3.11"/>
    </reaction>
</comment>
<comment type="cofactor">
    <cofactor evidence="1">
        <name>Mn(2+)</name>
        <dbReference type="ChEBI" id="CHEBI:29035"/>
    </cofactor>
</comment>
<comment type="pathway">
    <text evidence="1">Amine and polyamine biosynthesis; putrescine biosynthesis via agmatine pathway; putrescine from agmatine: step 1/1.</text>
</comment>
<comment type="similarity">
    <text evidence="1">Belongs to the arginase family. Agmatinase subfamily.</text>
</comment>
<name>SPEB_NEIMA</name>